<dbReference type="EMBL" id="CH981526">
    <property type="protein sequence ID" value="EDK44850.1"/>
    <property type="molecule type" value="Genomic_DNA"/>
</dbReference>
<dbReference type="RefSeq" id="XP_001526471.1">
    <property type="nucleotide sequence ID" value="XM_001526421.1"/>
</dbReference>
<dbReference type="SMR" id="A5E092"/>
<dbReference type="FunCoup" id="A5E092">
    <property type="interactions" value="315"/>
</dbReference>
<dbReference type="STRING" id="379508.A5E092"/>
<dbReference type="GeneID" id="5233318"/>
<dbReference type="KEGG" id="lel:PVL30_003857"/>
<dbReference type="eggNOG" id="ENOG502S9WJ">
    <property type="taxonomic scope" value="Eukaryota"/>
</dbReference>
<dbReference type="HOGENOM" id="CLU_134052_2_1_1"/>
<dbReference type="InParanoid" id="A5E092"/>
<dbReference type="OMA" id="YESGWFD"/>
<dbReference type="OrthoDB" id="6221744at2759"/>
<dbReference type="Proteomes" id="UP000001996">
    <property type="component" value="Unassembled WGS sequence"/>
</dbReference>
<dbReference type="GO" id="GO:0071819">
    <property type="term" value="C:DUBm complex"/>
    <property type="evidence" value="ECO:0007669"/>
    <property type="project" value="UniProtKB-UniRule"/>
</dbReference>
<dbReference type="GO" id="GO:0005643">
    <property type="term" value="C:nuclear pore"/>
    <property type="evidence" value="ECO:0007669"/>
    <property type="project" value="UniProtKB-UniRule"/>
</dbReference>
<dbReference type="GO" id="GO:0005654">
    <property type="term" value="C:nucleoplasm"/>
    <property type="evidence" value="ECO:0007669"/>
    <property type="project" value="UniProtKB-SubCell"/>
</dbReference>
<dbReference type="GO" id="GO:0000932">
    <property type="term" value="C:P-body"/>
    <property type="evidence" value="ECO:0007669"/>
    <property type="project" value="UniProtKB-SubCell"/>
</dbReference>
<dbReference type="GO" id="GO:0000124">
    <property type="term" value="C:SAGA complex"/>
    <property type="evidence" value="ECO:0007669"/>
    <property type="project" value="UniProtKB-UniRule"/>
</dbReference>
<dbReference type="GO" id="GO:0070390">
    <property type="term" value="C:transcription export complex 2"/>
    <property type="evidence" value="ECO:0007669"/>
    <property type="project" value="UniProtKB-UniRule"/>
</dbReference>
<dbReference type="GO" id="GO:0003713">
    <property type="term" value="F:transcription coactivator activity"/>
    <property type="evidence" value="ECO:0007669"/>
    <property type="project" value="UniProtKB-UniRule"/>
</dbReference>
<dbReference type="GO" id="GO:0006325">
    <property type="term" value="P:chromatin organization"/>
    <property type="evidence" value="ECO:0007669"/>
    <property type="project" value="UniProtKB-KW"/>
</dbReference>
<dbReference type="GO" id="GO:0006406">
    <property type="term" value="P:mRNA export from nucleus"/>
    <property type="evidence" value="ECO:0007669"/>
    <property type="project" value="UniProtKB-UniRule"/>
</dbReference>
<dbReference type="GO" id="GO:0015031">
    <property type="term" value="P:protein transport"/>
    <property type="evidence" value="ECO:0007669"/>
    <property type="project" value="UniProtKB-KW"/>
</dbReference>
<dbReference type="GO" id="GO:0006368">
    <property type="term" value="P:transcription elongation by RNA polymerase II"/>
    <property type="evidence" value="ECO:0007669"/>
    <property type="project" value="UniProtKB-UniRule"/>
</dbReference>
<dbReference type="Gene3D" id="1.10.246.140">
    <property type="match status" value="1"/>
</dbReference>
<dbReference type="HAMAP" id="MF_03046">
    <property type="entry name" value="ENY2_Sus1"/>
    <property type="match status" value="1"/>
</dbReference>
<dbReference type="InterPro" id="IPR018783">
    <property type="entry name" value="TF_ENY2"/>
</dbReference>
<dbReference type="InterPro" id="IPR038212">
    <property type="entry name" value="TF_EnY2_sf"/>
</dbReference>
<dbReference type="PANTHER" id="PTHR12514">
    <property type="entry name" value="ENHANCER OF YELLOW 2 TRANSCRIPTION FACTOR"/>
    <property type="match status" value="1"/>
</dbReference>
<dbReference type="Pfam" id="PF10163">
    <property type="entry name" value="EnY2"/>
    <property type="match status" value="1"/>
</dbReference>
<reference key="1">
    <citation type="journal article" date="2009" name="Nature">
        <title>Evolution of pathogenicity and sexual reproduction in eight Candida genomes.</title>
        <authorList>
            <person name="Butler G."/>
            <person name="Rasmussen M.D."/>
            <person name="Lin M.F."/>
            <person name="Santos M.A.S."/>
            <person name="Sakthikumar S."/>
            <person name="Munro C.A."/>
            <person name="Rheinbay E."/>
            <person name="Grabherr M."/>
            <person name="Forche A."/>
            <person name="Reedy J.L."/>
            <person name="Agrafioti I."/>
            <person name="Arnaud M.B."/>
            <person name="Bates S."/>
            <person name="Brown A.J.P."/>
            <person name="Brunke S."/>
            <person name="Costanzo M.C."/>
            <person name="Fitzpatrick D.A."/>
            <person name="de Groot P.W.J."/>
            <person name="Harris D."/>
            <person name="Hoyer L.L."/>
            <person name="Hube B."/>
            <person name="Klis F.M."/>
            <person name="Kodira C."/>
            <person name="Lennard N."/>
            <person name="Logue M.E."/>
            <person name="Martin R."/>
            <person name="Neiman A.M."/>
            <person name="Nikolaou E."/>
            <person name="Quail M.A."/>
            <person name="Quinn J."/>
            <person name="Santos M.C."/>
            <person name="Schmitzberger F.F."/>
            <person name="Sherlock G."/>
            <person name="Shah P."/>
            <person name="Silverstein K.A.T."/>
            <person name="Skrzypek M.S."/>
            <person name="Soll D."/>
            <person name="Staggs R."/>
            <person name="Stansfield I."/>
            <person name="Stumpf M.P.H."/>
            <person name="Sudbery P.E."/>
            <person name="Srikantha T."/>
            <person name="Zeng Q."/>
            <person name="Berman J."/>
            <person name="Berriman M."/>
            <person name="Heitman J."/>
            <person name="Gow N.A.R."/>
            <person name="Lorenz M.C."/>
            <person name="Birren B.W."/>
            <person name="Kellis M."/>
            <person name="Cuomo C.A."/>
        </authorList>
    </citation>
    <scope>NUCLEOTIDE SEQUENCE [LARGE SCALE GENOMIC DNA]</scope>
    <source>
        <strain>ATCC 11503 / BCRC 21390 / CBS 2605 / JCM 1781 / NBRC 1676 / NRRL YB-4239</strain>
    </source>
</reference>
<evidence type="ECO:0000250" key="1"/>
<evidence type="ECO:0000255" key="2">
    <source>
        <dbReference type="HAMAP-Rule" id="MF_03046"/>
    </source>
</evidence>
<gene>
    <name evidence="2" type="primary">SUS1</name>
    <name type="ORF">LELG_03029</name>
</gene>
<proteinExistence type="inferred from homology"/>
<protein>
    <recommendedName>
        <fullName evidence="2">Transcription and mRNA export factor SUS1</fullName>
    </recommendedName>
</protein>
<keyword id="KW-0010">Activator</keyword>
<keyword id="KW-0156">Chromatin regulator</keyword>
<keyword id="KW-0963">Cytoplasm</keyword>
<keyword id="KW-0509">mRNA transport</keyword>
<keyword id="KW-0539">Nucleus</keyword>
<keyword id="KW-0653">Protein transport</keyword>
<keyword id="KW-1185">Reference proteome</keyword>
<keyword id="KW-0804">Transcription</keyword>
<keyword id="KW-0805">Transcription regulation</keyword>
<keyword id="KW-0811">Translocation</keyword>
<keyword id="KW-0813">Transport</keyword>
<name>SUS1_LODEL</name>
<sequence>MTRDGDNSELNQIKSKIQEHLVSSGNYELISKQLKLQLIESGWYDKVAQIAMDELNNSSSKDTKDGGRAYTTKSLSDLYTVVKPKAEGLVPNEVRENMLKRIELYLDDLIE</sequence>
<feature type="chain" id="PRO_0000367570" description="Transcription and mRNA export factor SUS1">
    <location>
        <begin position="1"/>
        <end position="111"/>
    </location>
</feature>
<comment type="function">
    <text evidence="1">Involved in mRNA export coupled transcription activation by association with both the TREX-2 and the SAGA complexes. At the promoters, SAGA is required for recruitment of the basal transcription machinery. It influences RNA polymerase II transcriptional activity through different activities such as TBP interaction and promoter selectivity, interaction with transcription activators, and chromatin modification through histone acetylation and deubiquitination. Within the SAGA complex, participates in a subcomplex required for deubiquitination of H2B and for the maintenance of steady-state H3 methylation levels. The TREX-2 complex functions in docking export-competent ribonucleoprotein particles (mRNPs) to the nuclear entrance of the nuclear pore complex (nuclear basket). TREX-2 participates in mRNA export and accurate chromatin positioning in the nucleus by tethering genes to the nuclear periphery. May also be involved in cytoplasmic mRNA decay by interaction with components of P-bodies (By similarity).</text>
</comment>
<comment type="subunit">
    <text evidence="2">Component of the nuclear pore complex (NPC)-associated TREX-2 complex (transcription and export complex 2), composed of at least SUS1, SAC3, THP1, SEM1, and CDC31. TREX-2 contains 2 SUS1 chains. The TREX-2 complex interacts with the nucleoporin NUP1. Component of the 1.8 MDa SAGA transcription coactivator-HAT complex. SAGA is built of 5 distinct domains with specialized functions. Within the SAGA complex, SUS1, SGF11, SGF73 and UBP8 form an additional subcomplex of SAGA called the DUB module (deubiquitination module). Interacts directly with THP1, SAC3, SGF11, and with the RNA polymerase II.</text>
</comment>
<comment type="subcellular location">
    <subcellularLocation>
        <location evidence="2">Nucleus</location>
        <location evidence="2">Nucleoplasm</location>
    </subcellularLocation>
    <subcellularLocation>
        <location evidence="2">Cytoplasm</location>
        <location evidence="2">P-body</location>
    </subcellularLocation>
</comment>
<comment type="similarity">
    <text evidence="2">Belongs to the ENY2 family.</text>
</comment>
<accession>A5E092</accession>
<organism>
    <name type="scientific">Lodderomyces elongisporus (strain ATCC 11503 / CBS 2605 / JCM 1781 / NBRC 1676 / NRRL YB-4239)</name>
    <name type="common">Yeast</name>
    <name type="synonym">Saccharomyces elongisporus</name>
    <dbReference type="NCBI Taxonomy" id="379508"/>
    <lineage>
        <taxon>Eukaryota</taxon>
        <taxon>Fungi</taxon>
        <taxon>Dikarya</taxon>
        <taxon>Ascomycota</taxon>
        <taxon>Saccharomycotina</taxon>
        <taxon>Pichiomycetes</taxon>
        <taxon>Debaryomycetaceae</taxon>
        <taxon>Candida/Lodderomyces clade</taxon>
        <taxon>Lodderomyces</taxon>
    </lineage>
</organism>